<feature type="chain" id="PRO_1000148229" description="Putative glutamate--cysteine ligase 2">
    <location>
        <begin position="1"/>
        <end position="372"/>
    </location>
</feature>
<sequence length="372" mass="41640">MALNDFHVSEPYTLGIELEMQVINPPGYDLSQDSSTLIDAVKPQLTAGEIKHDITESMLEMATGVCRDIDQAAAQLSAMQHVILQAASEHHLGICGGGTHPFQKWQRQEVCDNERYQRTLENFGYLIQQATVFGQHVHVGCANGDDAIYLLHGLSHFVPHFIALSAASPYMQGSDTRFACARLNIFSAFPDNGPMPWVSNWQEFAGLFRRLSYTTMIDSIKDLHWDIRPNPAFGTVEVRVMDTPLTLDHAINMAGLIQATAHWLLTERPFKPQEQDYLLYKFNRFQACRYGLEGVITDAYTGDRRRLADDTLRLLDNVTPSARKLGADSAIDALRLQVKKGGNEAQYMREFIADGGSLIGLVQKHCEIWAGQ</sequence>
<dbReference type="EC" id="6.3.2.2" evidence="1"/>
<dbReference type="EMBL" id="AM933172">
    <property type="protein sequence ID" value="CAR32140.1"/>
    <property type="molecule type" value="Genomic_DNA"/>
</dbReference>
<dbReference type="RefSeq" id="WP_001196907.1">
    <property type="nucleotide sequence ID" value="NC_011294.1"/>
</dbReference>
<dbReference type="SMR" id="B5QUY5"/>
<dbReference type="KEGG" id="set:SEN0552"/>
<dbReference type="HOGENOM" id="CLU_044848_1_1_6"/>
<dbReference type="Proteomes" id="UP000000613">
    <property type="component" value="Chromosome"/>
</dbReference>
<dbReference type="GO" id="GO:0005524">
    <property type="term" value="F:ATP binding"/>
    <property type="evidence" value="ECO:0007669"/>
    <property type="project" value="UniProtKB-KW"/>
</dbReference>
<dbReference type="GO" id="GO:0004357">
    <property type="term" value="F:glutamate-cysteine ligase activity"/>
    <property type="evidence" value="ECO:0007669"/>
    <property type="project" value="UniProtKB-EC"/>
</dbReference>
<dbReference type="GO" id="GO:0042398">
    <property type="term" value="P:modified amino acid biosynthetic process"/>
    <property type="evidence" value="ECO:0007669"/>
    <property type="project" value="InterPro"/>
</dbReference>
<dbReference type="FunFam" id="3.30.590.20:FF:000002">
    <property type="entry name" value="Putative glutamate--cysteine ligase 2"/>
    <property type="match status" value="1"/>
</dbReference>
<dbReference type="Gene3D" id="3.30.590.20">
    <property type="match status" value="1"/>
</dbReference>
<dbReference type="HAMAP" id="MF_01609">
    <property type="entry name" value="Glu_cys_ligase_2"/>
    <property type="match status" value="1"/>
</dbReference>
<dbReference type="InterPro" id="IPR050141">
    <property type="entry name" value="GCL_type2/YbdK_subfam"/>
</dbReference>
<dbReference type="InterPro" id="IPR006336">
    <property type="entry name" value="GCS2"/>
</dbReference>
<dbReference type="InterPro" id="IPR014746">
    <property type="entry name" value="Gln_synth/guanido_kin_cat_dom"/>
</dbReference>
<dbReference type="InterPro" id="IPR011793">
    <property type="entry name" value="YbdK"/>
</dbReference>
<dbReference type="NCBIfam" id="TIGR02050">
    <property type="entry name" value="gshA_cyan_rel"/>
    <property type="match status" value="1"/>
</dbReference>
<dbReference type="NCBIfam" id="NF010040">
    <property type="entry name" value="PRK13516.1"/>
    <property type="match status" value="1"/>
</dbReference>
<dbReference type="PANTHER" id="PTHR36510">
    <property type="entry name" value="GLUTAMATE--CYSTEINE LIGASE 2-RELATED"/>
    <property type="match status" value="1"/>
</dbReference>
<dbReference type="PANTHER" id="PTHR36510:SF1">
    <property type="entry name" value="GLUTAMATE--CYSTEINE LIGASE 2-RELATED"/>
    <property type="match status" value="1"/>
</dbReference>
<dbReference type="Pfam" id="PF04107">
    <property type="entry name" value="GCS2"/>
    <property type="match status" value="1"/>
</dbReference>
<dbReference type="SUPFAM" id="SSF55931">
    <property type="entry name" value="Glutamine synthetase/guanido kinase"/>
    <property type="match status" value="1"/>
</dbReference>
<organism>
    <name type="scientific">Salmonella enteritidis PT4 (strain P125109)</name>
    <dbReference type="NCBI Taxonomy" id="550537"/>
    <lineage>
        <taxon>Bacteria</taxon>
        <taxon>Pseudomonadati</taxon>
        <taxon>Pseudomonadota</taxon>
        <taxon>Gammaproteobacteria</taxon>
        <taxon>Enterobacterales</taxon>
        <taxon>Enterobacteriaceae</taxon>
        <taxon>Salmonella</taxon>
    </lineage>
</organism>
<evidence type="ECO:0000255" key="1">
    <source>
        <dbReference type="HAMAP-Rule" id="MF_01609"/>
    </source>
</evidence>
<comment type="function">
    <text evidence="1">ATP-dependent carboxylate-amine ligase which exhibits weak glutamate--cysteine ligase activity.</text>
</comment>
<comment type="catalytic activity">
    <reaction evidence="1">
        <text>L-cysteine + L-glutamate + ATP = gamma-L-glutamyl-L-cysteine + ADP + phosphate + H(+)</text>
        <dbReference type="Rhea" id="RHEA:13285"/>
        <dbReference type="ChEBI" id="CHEBI:15378"/>
        <dbReference type="ChEBI" id="CHEBI:29985"/>
        <dbReference type="ChEBI" id="CHEBI:30616"/>
        <dbReference type="ChEBI" id="CHEBI:35235"/>
        <dbReference type="ChEBI" id="CHEBI:43474"/>
        <dbReference type="ChEBI" id="CHEBI:58173"/>
        <dbReference type="ChEBI" id="CHEBI:456216"/>
        <dbReference type="EC" id="6.3.2.2"/>
    </reaction>
</comment>
<comment type="subunit">
    <text evidence="1">Homodimer.</text>
</comment>
<comment type="similarity">
    <text evidence="1">Belongs to the glutamate--cysteine ligase type 2 family. YbdK subfamily.</text>
</comment>
<name>GCS2_SALEP</name>
<reference key="1">
    <citation type="journal article" date="2008" name="Genome Res.">
        <title>Comparative genome analysis of Salmonella enteritidis PT4 and Salmonella gallinarum 287/91 provides insights into evolutionary and host adaptation pathways.</title>
        <authorList>
            <person name="Thomson N.R."/>
            <person name="Clayton D.J."/>
            <person name="Windhorst D."/>
            <person name="Vernikos G."/>
            <person name="Davidson S."/>
            <person name="Churcher C."/>
            <person name="Quail M.A."/>
            <person name="Stevens M."/>
            <person name="Jones M.A."/>
            <person name="Watson M."/>
            <person name="Barron A."/>
            <person name="Layton A."/>
            <person name="Pickard D."/>
            <person name="Kingsley R.A."/>
            <person name="Bignell A."/>
            <person name="Clark L."/>
            <person name="Harris B."/>
            <person name="Ormond D."/>
            <person name="Abdellah Z."/>
            <person name="Brooks K."/>
            <person name="Cherevach I."/>
            <person name="Chillingworth T."/>
            <person name="Woodward J."/>
            <person name="Norberczak H."/>
            <person name="Lord A."/>
            <person name="Arrowsmith C."/>
            <person name="Jagels K."/>
            <person name="Moule S."/>
            <person name="Mungall K."/>
            <person name="Saunders M."/>
            <person name="Whitehead S."/>
            <person name="Chabalgoity J.A."/>
            <person name="Maskell D."/>
            <person name="Humphreys T."/>
            <person name="Roberts M."/>
            <person name="Barrow P.A."/>
            <person name="Dougan G."/>
            <person name="Parkhill J."/>
        </authorList>
    </citation>
    <scope>NUCLEOTIDE SEQUENCE [LARGE SCALE GENOMIC DNA]</scope>
    <source>
        <strain>P125109</strain>
    </source>
</reference>
<accession>B5QUY5</accession>
<proteinExistence type="inferred from homology"/>
<keyword id="KW-0067">ATP-binding</keyword>
<keyword id="KW-0436">Ligase</keyword>
<keyword id="KW-0547">Nucleotide-binding</keyword>
<protein>
    <recommendedName>
        <fullName evidence="1">Putative glutamate--cysteine ligase 2</fullName>
        <ecNumber evidence="1">6.3.2.2</ecNumber>
    </recommendedName>
    <alternativeName>
        <fullName evidence="1">Gamma-glutamylcysteine synthetase 2</fullName>
        <shortName evidence="1">GCS 2</shortName>
        <shortName evidence="1">Gamma-GCS 2</shortName>
    </alternativeName>
</protein>
<gene>
    <name type="primary">ybdK</name>
    <name type="ordered locus">SEN0552</name>
</gene>